<proteinExistence type="inferred from homology"/>
<protein>
    <recommendedName>
        <fullName evidence="1">Queuine tRNA-ribosyltransferase</fullName>
        <ecNumber evidence="1">2.4.2.29</ecNumber>
    </recommendedName>
    <alternativeName>
        <fullName evidence="1">Guanine insertion enzyme</fullName>
    </alternativeName>
    <alternativeName>
        <fullName evidence="1">tRNA-guanine transglycosylase</fullName>
    </alternativeName>
</protein>
<keyword id="KW-0328">Glycosyltransferase</keyword>
<keyword id="KW-0479">Metal-binding</keyword>
<keyword id="KW-0671">Queuosine biosynthesis</keyword>
<keyword id="KW-1185">Reference proteome</keyword>
<keyword id="KW-0808">Transferase</keyword>
<keyword id="KW-0819">tRNA processing</keyword>
<keyword id="KW-0862">Zinc</keyword>
<evidence type="ECO:0000255" key="1">
    <source>
        <dbReference type="HAMAP-Rule" id="MF_00168"/>
    </source>
</evidence>
<name>TGT_DESAH</name>
<organism>
    <name type="scientific">Desulforapulum autotrophicum (strain ATCC 43914 / DSM 3382 / VKM B-1955 / HRM2)</name>
    <name type="common">Desulfobacterium autotrophicum</name>
    <dbReference type="NCBI Taxonomy" id="177437"/>
    <lineage>
        <taxon>Bacteria</taxon>
        <taxon>Pseudomonadati</taxon>
        <taxon>Thermodesulfobacteriota</taxon>
        <taxon>Desulfobacteria</taxon>
        <taxon>Desulfobacterales</taxon>
        <taxon>Desulfobacteraceae</taxon>
        <taxon>Desulforapulum</taxon>
    </lineage>
</organism>
<gene>
    <name evidence="1" type="primary">tgt</name>
    <name type="ordered locus">HRM2_31390</name>
</gene>
<reference key="1">
    <citation type="journal article" date="2009" name="Environ. Microbiol.">
        <title>Genome sequence of Desulfobacterium autotrophicum HRM2, a marine sulfate reducer oxidizing organic carbon completely to carbon dioxide.</title>
        <authorList>
            <person name="Strittmatter A.W."/>
            <person name="Liesegang H."/>
            <person name="Rabus R."/>
            <person name="Decker I."/>
            <person name="Amann J."/>
            <person name="Andres S."/>
            <person name="Henne A."/>
            <person name="Fricke W.F."/>
            <person name="Martinez-Arias R."/>
            <person name="Bartels D."/>
            <person name="Goesmann A."/>
            <person name="Krause L."/>
            <person name="Puehler A."/>
            <person name="Klenk H.P."/>
            <person name="Richter M."/>
            <person name="Schuler M."/>
            <person name="Gloeckner F.O."/>
            <person name="Meyerdierks A."/>
            <person name="Gottschalk G."/>
            <person name="Amann R."/>
        </authorList>
    </citation>
    <scope>NUCLEOTIDE SEQUENCE [LARGE SCALE GENOMIC DNA]</scope>
    <source>
        <strain>ATCC 43914 / DSM 3382 / VKM B-1955 / HRM2</strain>
    </source>
</reference>
<sequence>MLTFDIINQSLESRARTGRITTAHGVIETPIFMPVGTLGTVKAVSVEELKACQAQIILGNTYHLYLRPGCEVMAHMGGLHPFMNWDRPILTDSGGFQFFSLAKLAKFKDEGVSFQSHIDGSRHLFTPERAVEIQSILGSDIMMSLDWCMGYPATRKEAMGALEKTTQWAERGRNFWIEQGRVNNLFGIVQGGMFADLRSISARQLADLDFPGYAIGGLSVGEPTELMYEMADHTVPQLPLEKPKYVMGVGTPENLVELAGMGVDMFDCVMPSRNARNGQLFTSTGTMNISNAAFRLDESPLDAECSCYTCQNYSRAYLRHLYKSRELLAYRLNTIHNLHYYLDLMHQMRNAINQGRFMAFKQEFYRKRER</sequence>
<dbReference type="EC" id="2.4.2.29" evidence="1"/>
<dbReference type="EMBL" id="CP001087">
    <property type="protein sequence ID" value="ACN16222.1"/>
    <property type="molecule type" value="Genomic_DNA"/>
</dbReference>
<dbReference type="RefSeq" id="WP_015904984.1">
    <property type="nucleotide sequence ID" value="NC_012108.1"/>
</dbReference>
<dbReference type="SMR" id="C0QKY2"/>
<dbReference type="STRING" id="177437.HRM2_31390"/>
<dbReference type="KEGG" id="dat:HRM2_31390"/>
<dbReference type="eggNOG" id="COG0343">
    <property type="taxonomic scope" value="Bacteria"/>
</dbReference>
<dbReference type="HOGENOM" id="CLU_022060_0_1_7"/>
<dbReference type="OrthoDB" id="9805417at2"/>
<dbReference type="UniPathway" id="UPA00392"/>
<dbReference type="Proteomes" id="UP000000442">
    <property type="component" value="Chromosome"/>
</dbReference>
<dbReference type="GO" id="GO:0005829">
    <property type="term" value="C:cytosol"/>
    <property type="evidence" value="ECO:0007669"/>
    <property type="project" value="TreeGrafter"/>
</dbReference>
<dbReference type="GO" id="GO:0046872">
    <property type="term" value="F:metal ion binding"/>
    <property type="evidence" value="ECO:0007669"/>
    <property type="project" value="UniProtKB-KW"/>
</dbReference>
<dbReference type="GO" id="GO:0008479">
    <property type="term" value="F:tRNA-guanosine(34) queuine transglycosylase activity"/>
    <property type="evidence" value="ECO:0007669"/>
    <property type="project" value="UniProtKB-UniRule"/>
</dbReference>
<dbReference type="GO" id="GO:0008616">
    <property type="term" value="P:queuosine biosynthetic process"/>
    <property type="evidence" value="ECO:0007669"/>
    <property type="project" value="UniProtKB-UniRule"/>
</dbReference>
<dbReference type="GO" id="GO:0002099">
    <property type="term" value="P:tRNA wobble guanine modification"/>
    <property type="evidence" value="ECO:0007669"/>
    <property type="project" value="TreeGrafter"/>
</dbReference>
<dbReference type="GO" id="GO:0101030">
    <property type="term" value="P:tRNA-guanine transglycosylation"/>
    <property type="evidence" value="ECO:0007669"/>
    <property type="project" value="InterPro"/>
</dbReference>
<dbReference type="FunFam" id="3.20.20.105:FF:000001">
    <property type="entry name" value="Queuine tRNA-ribosyltransferase"/>
    <property type="match status" value="1"/>
</dbReference>
<dbReference type="Gene3D" id="3.20.20.105">
    <property type="entry name" value="Queuine tRNA-ribosyltransferase-like"/>
    <property type="match status" value="1"/>
</dbReference>
<dbReference type="HAMAP" id="MF_00168">
    <property type="entry name" value="Q_tRNA_Tgt"/>
    <property type="match status" value="1"/>
</dbReference>
<dbReference type="InterPro" id="IPR050076">
    <property type="entry name" value="ArchSynthase1/Queuine_TRR"/>
</dbReference>
<dbReference type="InterPro" id="IPR004803">
    <property type="entry name" value="TGT"/>
</dbReference>
<dbReference type="InterPro" id="IPR036511">
    <property type="entry name" value="TGT-like_sf"/>
</dbReference>
<dbReference type="InterPro" id="IPR002616">
    <property type="entry name" value="tRNA_ribo_trans-like"/>
</dbReference>
<dbReference type="NCBIfam" id="TIGR00430">
    <property type="entry name" value="Q_tRNA_tgt"/>
    <property type="match status" value="1"/>
</dbReference>
<dbReference type="NCBIfam" id="TIGR00449">
    <property type="entry name" value="tgt_general"/>
    <property type="match status" value="1"/>
</dbReference>
<dbReference type="PANTHER" id="PTHR46499">
    <property type="entry name" value="QUEUINE TRNA-RIBOSYLTRANSFERASE"/>
    <property type="match status" value="1"/>
</dbReference>
<dbReference type="PANTHER" id="PTHR46499:SF1">
    <property type="entry name" value="QUEUINE TRNA-RIBOSYLTRANSFERASE"/>
    <property type="match status" value="1"/>
</dbReference>
<dbReference type="Pfam" id="PF01702">
    <property type="entry name" value="TGT"/>
    <property type="match status" value="1"/>
</dbReference>
<dbReference type="SUPFAM" id="SSF51713">
    <property type="entry name" value="tRNA-guanine transglycosylase"/>
    <property type="match status" value="1"/>
</dbReference>
<feature type="chain" id="PRO_1000203650" description="Queuine tRNA-ribosyltransferase">
    <location>
        <begin position="1"/>
        <end position="370"/>
    </location>
</feature>
<feature type="region of interest" description="RNA binding" evidence="1">
    <location>
        <begin position="248"/>
        <end position="254"/>
    </location>
</feature>
<feature type="active site" description="Proton acceptor" evidence="1">
    <location>
        <position position="92"/>
    </location>
</feature>
<feature type="active site" description="Nucleophile" evidence="1">
    <location>
        <position position="267"/>
    </location>
</feature>
<feature type="binding site" evidence="1">
    <location>
        <begin position="92"/>
        <end position="96"/>
    </location>
    <ligand>
        <name>substrate</name>
    </ligand>
</feature>
<feature type="binding site" evidence="1">
    <location>
        <position position="146"/>
    </location>
    <ligand>
        <name>substrate</name>
    </ligand>
</feature>
<feature type="binding site" evidence="1">
    <location>
        <position position="190"/>
    </location>
    <ligand>
        <name>substrate</name>
    </ligand>
</feature>
<feature type="binding site" evidence="1">
    <location>
        <position position="217"/>
    </location>
    <ligand>
        <name>substrate</name>
    </ligand>
</feature>
<feature type="binding site" evidence="1">
    <location>
        <position position="305"/>
    </location>
    <ligand>
        <name>Zn(2+)</name>
        <dbReference type="ChEBI" id="CHEBI:29105"/>
    </ligand>
</feature>
<feature type="binding site" evidence="1">
    <location>
        <position position="307"/>
    </location>
    <ligand>
        <name>Zn(2+)</name>
        <dbReference type="ChEBI" id="CHEBI:29105"/>
    </ligand>
</feature>
<feature type="binding site" evidence="1">
    <location>
        <position position="310"/>
    </location>
    <ligand>
        <name>Zn(2+)</name>
        <dbReference type="ChEBI" id="CHEBI:29105"/>
    </ligand>
</feature>
<feature type="binding site" evidence="1">
    <location>
        <position position="336"/>
    </location>
    <ligand>
        <name>Zn(2+)</name>
        <dbReference type="ChEBI" id="CHEBI:29105"/>
    </ligand>
</feature>
<comment type="function">
    <text evidence="1">Catalyzes the base-exchange of a guanine (G) residue with the queuine precursor 7-aminomethyl-7-deazaguanine (PreQ1) at position 34 (anticodon wobble position) in tRNAs with GU(N) anticodons (tRNA-Asp, -Asn, -His and -Tyr). Catalysis occurs through a double-displacement mechanism. The nucleophile active site attacks the C1' of nucleotide 34 to detach the guanine base from the RNA, forming a covalent enzyme-RNA intermediate. The proton acceptor active site deprotonates the incoming PreQ1, allowing a nucleophilic attack on the C1' of the ribose to form the product. After dissociation, two additional enzymatic reactions on the tRNA convert PreQ1 to queuine (Q), resulting in the hypermodified nucleoside queuosine (7-(((4,5-cis-dihydroxy-2-cyclopenten-1-yl)amino)methyl)-7-deazaguanosine).</text>
</comment>
<comment type="catalytic activity">
    <reaction evidence="1">
        <text>7-aminomethyl-7-carbaguanine + guanosine(34) in tRNA = 7-aminomethyl-7-carbaguanosine(34) in tRNA + guanine</text>
        <dbReference type="Rhea" id="RHEA:24104"/>
        <dbReference type="Rhea" id="RHEA-COMP:10341"/>
        <dbReference type="Rhea" id="RHEA-COMP:10342"/>
        <dbReference type="ChEBI" id="CHEBI:16235"/>
        <dbReference type="ChEBI" id="CHEBI:58703"/>
        <dbReference type="ChEBI" id="CHEBI:74269"/>
        <dbReference type="ChEBI" id="CHEBI:82833"/>
        <dbReference type="EC" id="2.4.2.29"/>
    </reaction>
</comment>
<comment type="cofactor">
    <cofactor evidence="1">
        <name>Zn(2+)</name>
        <dbReference type="ChEBI" id="CHEBI:29105"/>
    </cofactor>
    <text evidence="1">Binds 1 zinc ion per subunit.</text>
</comment>
<comment type="pathway">
    <text evidence="1">tRNA modification; tRNA-queuosine biosynthesis.</text>
</comment>
<comment type="subunit">
    <text evidence="1">Homodimer. Within each dimer, one monomer is responsible for RNA recognition and catalysis, while the other monomer binds to the replacement base PreQ1.</text>
</comment>
<comment type="similarity">
    <text evidence="1">Belongs to the queuine tRNA-ribosyltransferase family.</text>
</comment>
<accession>C0QKY2</accession>